<dbReference type="EMBL" id="CP009805">
    <property type="protein sequence ID" value="ATZ46329.1"/>
    <property type="molecule type" value="Genomic_DNA"/>
</dbReference>
<dbReference type="SMR" id="A6S5C9"/>
<dbReference type="EnsemblFungi" id="Bcin01g09480.1">
    <property type="protein sequence ID" value="Bcin01p09480.1"/>
    <property type="gene ID" value="Bcin01g09480"/>
</dbReference>
<dbReference type="VEuPathDB" id="FungiDB:Bcin01g09480"/>
<dbReference type="OrthoDB" id="268799at2759"/>
<dbReference type="Proteomes" id="UP000001798">
    <property type="component" value="Chromosome bcin01"/>
</dbReference>
<dbReference type="GO" id="GO:1990726">
    <property type="term" value="C:Lsm1-7-Pat1 complex"/>
    <property type="evidence" value="ECO:0007669"/>
    <property type="project" value="EnsemblFungi"/>
</dbReference>
<dbReference type="GO" id="GO:0005730">
    <property type="term" value="C:nucleolus"/>
    <property type="evidence" value="ECO:0007669"/>
    <property type="project" value="EnsemblFungi"/>
</dbReference>
<dbReference type="GO" id="GO:0000932">
    <property type="term" value="C:P-body"/>
    <property type="evidence" value="ECO:0007669"/>
    <property type="project" value="EnsemblFungi"/>
</dbReference>
<dbReference type="GO" id="GO:0005732">
    <property type="term" value="C:sno(s)RNA-containing ribonucleoprotein complex"/>
    <property type="evidence" value="ECO:0007669"/>
    <property type="project" value="EnsemblFungi"/>
</dbReference>
<dbReference type="GO" id="GO:0005681">
    <property type="term" value="C:spliceosomal complex"/>
    <property type="evidence" value="ECO:0007669"/>
    <property type="project" value="UniProtKB-KW"/>
</dbReference>
<dbReference type="GO" id="GO:0046540">
    <property type="term" value="C:U4/U6 x U5 tri-snRNP complex"/>
    <property type="evidence" value="ECO:0007669"/>
    <property type="project" value="EnsemblFungi"/>
</dbReference>
<dbReference type="GO" id="GO:0005688">
    <property type="term" value="C:U6 snRNP"/>
    <property type="evidence" value="ECO:0007669"/>
    <property type="project" value="EnsemblFungi"/>
</dbReference>
<dbReference type="GO" id="GO:0003723">
    <property type="term" value="F:RNA binding"/>
    <property type="evidence" value="ECO:0007669"/>
    <property type="project" value="UniProtKB-KW"/>
</dbReference>
<dbReference type="GO" id="GO:0000290">
    <property type="term" value="P:deadenylation-dependent decapping of nuclear-transcribed mRNA"/>
    <property type="evidence" value="ECO:0007669"/>
    <property type="project" value="EnsemblFungi"/>
</dbReference>
<dbReference type="GO" id="GO:0030490">
    <property type="term" value="P:maturation of SSU-rRNA"/>
    <property type="evidence" value="ECO:0007669"/>
    <property type="project" value="EnsemblFungi"/>
</dbReference>
<dbReference type="GO" id="GO:0000398">
    <property type="term" value="P:mRNA splicing, via spliceosome"/>
    <property type="evidence" value="ECO:0007669"/>
    <property type="project" value="EnsemblFungi"/>
</dbReference>
<dbReference type="GO" id="GO:0008033">
    <property type="term" value="P:tRNA processing"/>
    <property type="evidence" value="ECO:0007669"/>
    <property type="project" value="UniProtKB-KW"/>
</dbReference>
<dbReference type="CDD" id="cd01726">
    <property type="entry name" value="LSm6"/>
    <property type="match status" value="1"/>
</dbReference>
<dbReference type="FunFam" id="2.30.30.100:FF:000037">
    <property type="entry name" value="U6 snRNA-associated Sm-like protein LSm6"/>
    <property type="match status" value="1"/>
</dbReference>
<dbReference type="Gene3D" id="2.30.30.100">
    <property type="match status" value="1"/>
</dbReference>
<dbReference type="InterPro" id="IPR016487">
    <property type="entry name" value="Lsm6/sSmF"/>
</dbReference>
<dbReference type="InterPro" id="IPR010920">
    <property type="entry name" value="LSM_dom_sf"/>
</dbReference>
<dbReference type="InterPro" id="IPR047575">
    <property type="entry name" value="Sm"/>
</dbReference>
<dbReference type="InterPro" id="IPR001163">
    <property type="entry name" value="Sm_dom_euk/arc"/>
</dbReference>
<dbReference type="PANTHER" id="PTHR11021">
    <property type="entry name" value="SMALL NUCLEAR RIBONUCLEOPROTEIN F SNRNP-F"/>
    <property type="match status" value="1"/>
</dbReference>
<dbReference type="PANTHER" id="PTHR11021:SF1">
    <property type="entry name" value="U6 SNRNA-ASSOCIATED SM-LIKE PROTEIN LSM6"/>
    <property type="match status" value="1"/>
</dbReference>
<dbReference type="Pfam" id="PF01423">
    <property type="entry name" value="LSM"/>
    <property type="match status" value="1"/>
</dbReference>
<dbReference type="PIRSF" id="PIRSF006609">
    <property type="entry name" value="snRNP_SmF"/>
    <property type="match status" value="1"/>
</dbReference>
<dbReference type="SMART" id="SM00651">
    <property type="entry name" value="Sm"/>
    <property type="match status" value="1"/>
</dbReference>
<dbReference type="SUPFAM" id="SSF50182">
    <property type="entry name" value="Sm-like ribonucleoproteins"/>
    <property type="match status" value="1"/>
</dbReference>
<dbReference type="PROSITE" id="PS52002">
    <property type="entry name" value="SM"/>
    <property type="match status" value="1"/>
</dbReference>
<proteinExistence type="inferred from homology"/>
<evidence type="ECO:0000250" key="1"/>
<evidence type="ECO:0000255" key="2">
    <source>
        <dbReference type="PROSITE-ProRule" id="PRU01346"/>
    </source>
</evidence>
<evidence type="ECO:0000305" key="3"/>
<reference key="1">
    <citation type="journal article" date="2011" name="PLoS Genet.">
        <title>Genomic analysis of the necrotrophic fungal pathogens Sclerotinia sclerotiorum and Botrytis cinerea.</title>
        <authorList>
            <person name="Amselem J."/>
            <person name="Cuomo C.A."/>
            <person name="van Kan J.A.L."/>
            <person name="Viaud M."/>
            <person name="Benito E.P."/>
            <person name="Couloux A."/>
            <person name="Coutinho P.M."/>
            <person name="de Vries R.P."/>
            <person name="Dyer P.S."/>
            <person name="Fillinger S."/>
            <person name="Fournier E."/>
            <person name="Gout L."/>
            <person name="Hahn M."/>
            <person name="Kohn L."/>
            <person name="Lapalu N."/>
            <person name="Plummer K.M."/>
            <person name="Pradier J.-M."/>
            <person name="Quevillon E."/>
            <person name="Sharon A."/>
            <person name="Simon A."/>
            <person name="ten Have A."/>
            <person name="Tudzynski B."/>
            <person name="Tudzynski P."/>
            <person name="Wincker P."/>
            <person name="Andrew M."/>
            <person name="Anthouard V."/>
            <person name="Beever R.E."/>
            <person name="Beffa R."/>
            <person name="Benoit I."/>
            <person name="Bouzid O."/>
            <person name="Brault B."/>
            <person name="Chen Z."/>
            <person name="Choquer M."/>
            <person name="Collemare J."/>
            <person name="Cotton P."/>
            <person name="Danchin E.G."/>
            <person name="Da Silva C."/>
            <person name="Gautier A."/>
            <person name="Giraud C."/>
            <person name="Giraud T."/>
            <person name="Gonzalez C."/>
            <person name="Grossetete S."/>
            <person name="Gueldener U."/>
            <person name="Henrissat B."/>
            <person name="Howlett B.J."/>
            <person name="Kodira C."/>
            <person name="Kretschmer M."/>
            <person name="Lappartient A."/>
            <person name="Leroch M."/>
            <person name="Levis C."/>
            <person name="Mauceli E."/>
            <person name="Neuveglise C."/>
            <person name="Oeser B."/>
            <person name="Pearson M."/>
            <person name="Poulain J."/>
            <person name="Poussereau N."/>
            <person name="Quesneville H."/>
            <person name="Rascle C."/>
            <person name="Schumacher J."/>
            <person name="Segurens B."/>
            <person name="Sexton A."/>
            <person name="Silva E."/>
            <person name="Sirven C."/>
            <person name="Soanes D.M."/>
            <person name="Talbot N.J."/>
            <person name="Templeton M."/>
            <person name="Yandava C."/>
            <person name="Yarden O."/>
            <person name="Zeng Q."/>
            <person name="Rollins J.A."/>
            <person name="Lebrun M.-H."/>
            <person name="Dickman M."/>
        </authorList>
    </citation>
    <scope>NUCLEOTIDE SEQUENCE [LARGE SCALE GENOMIC DNA]</scope>
    <source>
        <strain>B05.10</strain>
    </source>
</reference>
<reference key="2">
    <citation type="journal article" date="2012" name="Eukaryot. Cell">
        <title>Genome update of Botrytis cinerea strains B05.10 and T4.</title>
        <authorList>
            <person name="Staats M."/>
            <person name="van Kan J.A.L."/>
        </authorList>
    </citation>
    <scope>NUCLEOTIDE SEQUENCE [LARGE SCALE GENOMIC DNA]</scope>
    <scope>GENOME REANNOTATION</scope>
    <source>
        <strain>B05.10</strain>
    </source>
</reference>
<reference key="3">
    <citation type="journal article" date="2017" name="Mol. Plant Pathol.">
        <title>A gapless genome sequence of the fungus Botrytis cinerea.</title>
        <authorList>
            <person name="van Kan J.A.L."/>
            <person name="Stassen J.H.M."/>
            <person name="Mosbach A."/>
            <person name="van der Lee T.A.J."/>
            <person name="Faino L."/>
            <person name="Farmer A.D."/>
            <person name="Papasotiriou D.G."/>
            <person name="Zhou S."/>
            <person name="Seidl M.F."/>
            <person name="Cottam E."/>
            <person name="Edel D."/>
            <person name="Hahn M."/>
            <person name="Schwartz D.C."/>
            <person name="Dietrich R.A."/>
            <person name="Widdison S."/>
            <person name="Scalliet G."/>
        </authorList>
    </citation>
    <scope>NUCLEOTIDE SEQUENCE [LARGE SCALE GENOMIC DNA]</scope>
    <scope>GENOME REANNOTATION</scope>
    <source>
        <strain>B05.10</strain>
    </source>
</reference>
<gene>
    <name type="primary">lsm6</name>
    <name type="ORF">BC1G_08321</name>
    <name type="ORF">BCIN_01g09480</name>
</gene>
<accession>A6S5C9</accession>
<accession>A0A384J713</accession>
<name>LSM6_BOTFB</name>
<organism>
    <name type="scientific">Botryotinia fuckeliana (strain B05.10)</name>
    <name type="common">Noble rot fungus</name>
    <name type="synonym">Botrytis cinerea</name>
    <dbReference type="NCBI Taxonomy" id="332648"/>
    <lineage>
        <taxon>Eukaryota</taxon>
        <taxon>Fungi</taxon>
        <taxon>Dikarya</taxon>
        <taxon>Ascomycota</taxon>
        <taxon>Pezizomycotina</taxon>
        <taxon>Leotiomycetes</taxon>
        <taxon>Helotiales</taxon>
        <taxon>Sclerotiniaceae</taxon>
        <taxon>Botrytis</taxon>
    </lineage>
</organism>
<sequence>MENGALQQGEGKDPSSFLSEIIGSKVIVKLNNSLVFKGELQSVDGYMNIALEKCEEWVHGKKKTVHGDAFVRGNNVMYISADESA</sequence>
<keyword id="KW-0963">Cytoplasm</keyword>
<keyword id="KW-0507">mRNA processing</keyword>
<keyword id="KW-0508">mRNA splicing</keyword>
<keyword id="KW-0539">Nucleus</keyword>
<keyword id="KW-1185">Reference proteome</keyword>
<keyword id="KW-0687">Ribonucleoprotein</keyword>
<keyword id="KW-0694">RNA-binding</keyword>
<keyword id="KW-0698">rRNA processing</keyword>
<keyword id="KW-0747">Spliceosome</keyword>
<keyword id="KW-0819">tRNA processing</keyword>
<comment type="function">
    <text evidence="1">Component of LSm protein complexes, which are involved in RNA processing and may function in a chaperone-like manner, facilitating the efficient association of RNA processing factors with their substrates. Component of the cytoplasmic LSM1-LSM7 complex, which is thought to be involved in mRNA degradation by activating the decapping step in the 5'-to-3' mRNA decay pathway. Component of the nuclear LSM2-LSM8 complex, which is involved in splicing of nuclear mRNAs. LSM2-LSM8 associates with multiple snRNP complexes containing the U6 snRNA (U4/U6 di-snRNP, spliceosomal U4/U6.U5 tri-snRNP, and free U6 snRNP). It binds directly to the 3'-terminal U-tract of U6 snRNA and plays a role in the biogenesis and stability of the U6 snRNP and U4/U6 snRNP complexes. LSM2-LSM8 probably also is involved degradation of nuclear pre-mRNA by targeting them for decapping, and in processing of pre-tRNAs, pre-rRNAs and U3 snoRNA (By similarity).</text>
</comment>
<comment type="subunit">
    <text evidence="1">Component of the heptameric LSM1-LSM7 complex, which consists of lsm1, lsm2, lsm3, lsm4, lsm5, lsm6 and lsm7. Component of the heptameric LSM2-LSM8 complex, which consists of lsm2, lsm3, lsm4, lsm5, lsm6, lsm7 and lsm8. The LSm subunits form a seven-membered ring structure with a doughnut shape (By similarity).</text>
</comment>
<comment type="subcellular location">
    <subcellularLocation>
        <location evidence="1">Cytoplasm</location>
    </subcellularLocation>
    <subcellularLocation>
        <location evidence="1">Nucleus</location>
    </subcellularLocation>
</comment>
<comment type="similarity">
    <text evidence="3">Belongs to the snRNP Sm proteins family. SmF/LSm6 subfamily.</text>
</comment>
<feature type="chain" id="PRO_0000333590" description="U6 snRNA-associated Sm-like protein LSm6">
    <location>
        <begin position="1"/>
        <end position="85"/>
    </location>
</feature>
<feature type="domain" description="Sm" evidence="2">
    <location>
        <begin position="13"/>
        <end position="85"/>
    </location>
</feature>
<protein>
    <recommendedName>
        <fullName>U6 snRNA-associated Sm-like protein LSm6</fullName>
    </recommendedName>
</protein>